<dbReference type="EMBL" id="HY042793">
    <property type="status" value="NOT_ANNOTATED_CDS"/>
    <property type="molecule type" value="mRNA"/>
</dbReference>
<dbReference type="EMBL" id="AL160275">
    <property type="status" value="NOT_ANNOTATED_CDS"/>
    <property type="molecule type" value="Genomic_DNA"/>
</dbReference>
<dbReference type="CCDS" id="CCDS87679.1"/>
<dbReference type="RefSeq" id="NP_001341574.1">
    <property type="nucleotide sequence ID" value="NM_001354645.2"/>
</dbReference>
<dbReference type="STRING" id="9606.ENSP00000489944"/>
<dbReference type="BioMuta" id="ENSG00000230054"/>
<dbReference type="MassIVE" id="A0A1B0GU33"/>
<dbReference type="PeptideAtlas" id="A0A1B0GU33"/>
<dbReference type="Ensembl" id="ENST00000423632.3">
    <property type="protein sequence ID" value="ENSP00000489944.1"/>
    <property type="gene ID" value="ENSG00000230054.3"/>
</dbReference>
<dbReference type="GeneID" id="105376230"/>
<dbReference type="MANE-Select" id="ENST00000423632.3">
    <property type="protein sequence ID" value="ENSP00000489944.1"/>
    <property type="RefSeq nucleotide sequence ID" value="NM_001354645.2"/>
    <property type="RefSeq protein sequence ID" value="NP_001341574.1"/>
</dbReference>
<dbReference type="AGR" id="HGNC:53655"/>
<dbReference type="GeneCards" id="TEX53"/>
<dbReference type="HGNC" id="HGNC:53655">
    <property type="gene designation" value="TEX53"/>
</dbReference>
<dbReference type="HPA" id="ENSG00000230054">
    <property type="expression patterns" value="Tissue enriched (testis)"/>
</dbReference>
<dbReference type="neXtProt" id="NX_A0A1B0GU33"/>
<dbReference type="OpenTargets" id="ENSG00000230054"/>
<dbReference type="VEuPathDB" id="HostDB:ENSG00000230054"/>
<dbReference type="GeneTree" id="ENSGT00910000146849"/>
<dbReference type="InParanoid" id="A0A1B0GU33"/>
<dbReference type="OMA" id="SAVPNRH"/>
<dbReference type="OrthoDB" id="9508633at2759"/>
<dbReference type="PAN-GO" id="A0A1B0GU33">
    <property type="GO annotations" value="0 GO annotations based on evolutionary models"/>
</dbReference>
<dbReference type="SignaLink" id="A0A1B0GU33"/>
<dbReference type="Pharos" id="A0A1B0GU33">
    <property type="development level" value="Tdark"/>
</dbReference>
<dbReference type="PRO" id="PR:A0A1B0GU33"/>
<dbReference type="Proteomes" id="UP000005640">
    <property type="component" value="Chromosome 9"/>
</dbReference>
<dbReference type="RNAct" id="A0A1B0GU33">
    <property type="molecule type" value="protein"/>
</dbReference>
<dbReference type="Bgee" id="ENSG00000230054">
    <property type="expression patterns" value="Expressed in left testis and 99 other cell types or tissues"/>
</dbReference>
<protein>
    <recommendedName>
        <fullName evidence="1">Testis-expressed protein 53</fullName>
    </recommendedName>
</protein>
<feature type="chain" id="PRO_0000443092" description="Testis-expressed protein 53">
    <location>
        <begin position="1"/>
        <end position="70"/>
    </location>
</feature>
<evidence type="ECO:0000305" key="1"/>
<evidence type="ECO:0000312" key="2">
    <source>
        <dbReference type="HGNC" id="HGNC:53655"/>
    </source>
</evidence>
<keyword id="KW-1267">Proteomics identification</keyword>
<keyword id="KW-1185">Reference proteome</keyword>
<organism>
    <name type="scientific">Homo sapiens</name>
    <name type="common">Human</name>
    <dbReference type="NCBI Taxonomy" id="9606"/>
    <lineage>
        <taxon>Eukaryota</taxon>
        <taxon>Metazoa</taxon>
        <taxon>Chordata</taxon>
        <taxon>Craniata</taxon>
        <taxon>Vertebrata</taxon>
        <taxon>Euteleostomi</taxon>
        <taxon>Mammalia</taxon>
        <taxon>Eutheria</taxon>
        <taxon>Euarchontoglires</taxon>
        <taxon>Primates</taxon>
        <taxon>Haplorrhini</taxon>
        <taxon>Catarrhini</taxon>
        <taxon>Hominidae</taxon>
        <taxon>Homo</taxon>
    </lineage>
</organism>
<comment type="tissue specificity">
    <text evidence="1">Expressed in Testis.</text>
</comment>
<accession>A0A1B0GU33</accession>
<reference key="1">
    <citation type="submission" date="2012-05" db="EMBL/GenBank/DDBJ databases">
        <title>RIKEN full-length enriched human cDNA library.</title>
        <authorList>
            <person name="Arakawa T."/>
            <person name="Carninci P."/>
            <person name="Fukuda S."/>
            <person name="Hasegawa A."/>
            <person name="Hayashida K."/>
            <person name="Hori F."/>
            <person name="Kai C."/>
            <person name="Kawai J."/>
            <person name="Kojima M."/>
            <person name="Murata M."/>
            <person name="Nakamura M."/>
            <person name="Nishiyori H."/>
            <person name="Nomura K."/>
            <person name="Ohno M."/>
            <person name="Sasaki D."/>
            <person name="Shibazaki E."/>
            <person name="Tagami M."/>
            <person name="Tagami Y."/>
            <person name="Hayashizaki Y."/>
        </authorList>
    </citation>
    <scope>NUCLEOTIDE SEQUENCE [LARGE SCALE MRNA]</scope>
    <source>
        <tissue>Testis</tissue>
    </source>
</reference>
<reference key="2">
    <citation type="journal article" date="2004" name="Nature">
        <title>DNA sequence and analysis of human chromosome 9.</title>
        <authorList>
            <person name="Humphray S.J."/>
            <person name="Oliver K."/>
            <person name="Hunt A.R."/>
            <person name="Plumb R.W."/>
            <person name="Loveland J.E."/>
            <person name="Howe K.L."/>
            <person name="Andrews T.D."/>
            <person name="Searle S."/>
            <person name="Hunt S.E."/>
            <person name="Scott C.E."/>
            <person name="Jones M.C."/>
            <person name="Ainscough R."/>
            <person name="Almeida J.P."/>
            <person name="Ambrose K.D."/>
            <person name="Ashwell R.I.S."/>
            <person name="Babbage A.K."/>
            <person name="Babbage S."/>
            <person name="Bagguley C.L."/>
            <person name="Bailey J."/>
            <person name="Banerjee R."/>
            <person name="Barker D.J."/>
            <person name="Barlow K.F."/>
            <person name="Bates K."/>
            <person name="Beasley H."/>
            <person name="Beasley O."/>
            <person name="Bird C.P."/>
            <person name="Bray-Allen S."/>
            <person name="Brown A.J."/>
            <person name="Brown J.Y."/>
            <person name="Burford D."/>
            <person name="Burrill W."/>
            <person name="Burton J."/>
            <person name="Carder C."/>
            <person name="Carter N.P."/>
            <person name="Chapman J.C."/>
            <person name="Chen Y."/>
            <person name="Clarke G."/>
            <person name="Clark S.Y."/>
            <person name="Clee C.M."/>
            <person name="Clegg S."/>
            <person name="Collier R.E."/>
            <person name="Corby N."/>
            <person name="Crosier M."/>
            <person name="Cummings A.T."/>
            <person name="Davies J."/>
            <person name="Dhami P."/>
            <person name="Dunn M."/>
            <person name="Dutta I."/>
            <person name="Dyer L.W."/>
            <person name="Earthrowl M.E."/>
            <person name="Faulkner L."/>
            <person name="Fleming C.J."/>
            <person name="Frankish A."/>
            <person name="Frankland J.A."/>
            <person name="French L."/>
            <person name="Fricker D.G."/>
            <person name="Garner P."/>
            <person name="Garnett J."/>
            <person name="Ghori J."/>
            <person name="Gilbert J.G.R."/>
            <person name="Glison C."/>
            <person name="Grafham D.V."/>
            <person name="Gribble S."/>
            <person name="Griffiths C."/>
            <person name="Griffiths-Jones S."/>
            <person name="Grocock R."/>
            <person name="Guy J."/>
            <person name="Hall R.E."/>
            <person name="Hammond S."/>
            <person name="Harley J.L."/>
            <person name="Harrison E.S.I."/>
            <person name="Hart E.A."/>
            <person name="Heath P.D."/>
            <person name="Henderson C.D."/>
            <person name="Hopkins B.L."/>
            <person name="Howard P.J."/>
            <person name="Howden P.J."/>
            <person name="Huckle E."/>
            <person name="Johnson C."/>
            <person name="Johnson D."/>
            <person name="Joy A.A."/>
            <person name="Kay M."/>
            <person name="Keenan S."/>
            <person name="Kershaw J.K."/>
            <person name="Kimberley A.M."/>
            <person name="King A."/>
            <person name="Knights A."/>
            <person name="Laird G.K."/>
            <person name="Langford C."/>
            <person name="Lawlor S."/>
            <person name="Leongamornlert D.A."/>
            <person name="Leversha M."/>
            <person name="Lloyd C."/>
            <person name="Lloyd D.M."/>
            <person name="Lovell J."/>
            <person name="Martin S."/>
            <person name="Mashreghi-Mohammadi M."/>
            <person name="Matthews L."/>
            <person name="McLaren S."/>
            <person name="McLay K.E."/>
            <person name="McMurray A."/>
            <person name="Milne S."/>
            <person name="Nickerson T."/>
            <person name="Nisbett J."/>
            <person name="Nordsiek G."/>
            <person name="Pearce A.V."/>
            <person name="Peck A.I."/>
            <person name="Porter K.M."/>
            <person name="Pandian R."/>
            <person name="Pelan S."/>
            <person name="Phillimore B."/>
            <person name="Povey S."/>
            <person name="Ramsey Y."/>
            <person name="Rand V."/>
            <person name="Scharfe M."/>
            <person name="Sehra H.K."/>
            <person name="Shownkeen R."/>
            <person name="Sims S.K."/>
            <person name="Skuce C.D."/>
            <person name="Smith M."/>
            <person name="Steward C.A."/>
            <person name="Swarbreck D."/>
            <person name="Sycamore N."/>
            <person name="Tester J."/>
            <person name="Thorpe A."/>
            <person name="Tracey A."/>
            <person name="Tromans A."/>
            <person name="Thomas D.W."/>
            <person name="Wall M."/>
            <person name="Wallis J.M."/>
            <person name="West A.P."/>
            <person name="Whitehead S.L."/>
            <person name="Willey D.L."/>
            <person name="Williams S.A."/>
            <person name="Wilming L."/>
            <person name="Wray P.W."/>
            <person name="Young L."/>
            <person name="Ashurst J.L."/>
            <person name="Coulson A."/>
            <person name="Blocker H."/>
            <person name="Durbin R.M."/>
            <person name="Sulston J.E."/>
            <person name="Hubbard T."/>
            <person name="Jackson M.J."/>
            <person name="Bentley D.R."/>
            <person name="Beck S."/>
            <person name="Rogers J."/>
            <person name="Dunham I."/>
        </authorList>
    </citation>
    <scope>NUCLEOTIDE SEQUENCE [LARGE SCALE GENOMIC DNA]</scope>
</reference>
<proteinExistence type="evidence at protein level"/>
<sequence length="70" mass="8127">MGSKIFCCCRKTSEGSSTTVGFHNPRMFEQHHPRSFNLNTNSLHSAVPKRHPRLPYDNRMMLKACILRRP</sequence>
<gene>
    <name evidence="2" type="primary">TEX53</name>
</gene>
<name>TEX53_HUMAN</name>